<reference key="1">
    <citation type="journal article" date="2002" name="Environ. Microbiol.">
        <title>Complete genome sequence and comparative analysis of the metabolically versatile Pseudomonas putida KT2440.</title>
        <authorList>
            <person name="Nelson K.E."/>
            <person name="Weinel C."/>
            <person name="Paulsen I.T."/>
            <person name="Dodson R.J."/>
            <person name="Hilbert H."/>
            <person name="Martins dos Santos V.A.P."/>
            <person name="Fouts D.E."/>
            <person name="Gill S.R."/>
            <person name="Pop M."/>
            <person name="Holmes M."/>
            <person name="Brinkac L.M."/>
            <person name="Beanan M.J."/>
            <person name="DeBoy R.T."/>
            <person name="Daugherty S.C."/>
            <person name="Kolonay J.F."/>
            <person name="Madupu R."/>
            <person name="Nelson W.C."/>
            <person name="White O."/>
            <person name="Peterson J.D."/>
            <person name="Khouri H.M."/>
            <person name="Hance I."/>
            <person name="Chris Lee P."/>
            <person name="Holtzapple E.K."/>
            <person name="Scanlan D."/>
            <person name="Tran K."/>
            <person name="Moazzez A."/>
            <person name="Utterback T.R."/>
            <person name="Rizzo M."/>
            <person name="Lee K."/>
            <person name="Kosack D."/>
            <person name="Moestl D."/>
            <person name="Wedler H."/>
            <person name="Lauber J."/>
            <person name="Stjepandic D."/>
            <person name="Hoheisel J."/>
            <person name="Straetz M."/>
            <person name="Heim S."/>
            <person name="Kiewitz C."/>
            <person name="Eisen J.A."/>
            <person name="Timmis K.N."/>
            <person name="Duesterhoeft A."/>
            <person name="Tuemmler B."/>
            <person name="Fraser C.M."/>
        </authorList>
    </citation>
    <scope>NUCLEOTIDE SEQUENCE [LARGE SCALE GENOMIC DNA]</scope>
    <source>
        <strain>ATCC 47054 / DSM 6125 / CFBP 8728 / NCIMB 11950 / KT2440</strain>
    </source>
</reference>
<evidence type="ECO:0000255" key="1">
    <source>
        <dbReference type="HAMAP-Rule" id="MF_00469"/>
    </source>
</evidence>
<gene>
    <name evidence="1" type="primary">trhO</name>
    <name type="ordered locus">PP_1758</name>
</gene>
<dbReference type="EC" id="1.14.-.-" evidence="1"/>
<dbReference type="EMBL" id="AE015451">
    <property type="protein sequence ID" value="AAN67378.1"/>
    <property type="molecule type" value="Genomic_DNA"/>
</dbReference>
<dbReference type="RefSeq" id="NP_743914.1">
    <property type="nucleotide sequence ID" value="NC_002947.4"/>
</dbReference>
<dbReference type="RefSeq" id="WP_010952798.1">
    <property type="nucleotide sequence ID" value="NZ_CP169744.1"/>
</dbReference>
<dbReference type="SMR" id="Q88M17"/>
<dbReference type="STRING" id="160488.PP_1758"/>
<dbReference type="PaxDb" id="160488-PP_1758"/>
<dbReference type="KEGG" id="ppu:PP_1758"/>
<dbReference type="PATRIC" id="fig|160488.4.peg.1853"/>
<dbReference type="eggNOG" id="COG1054">
    <property type="taxonomic scope" value="Bacteria"/>
</dbReference>
<dbReference type="HOGENOM" id="CLU_038878_0_0_6"/>
<dbReference type="OrthoDB" id="9778326at2"/>
<dbReference type="PhylomeDB" id="Q88M17"/>
<dbReference type="BioCyc" id="PPUT160488:G1G01-1859-MONOMER"/>
<dbReference type="Proteomes" id="UP000000556">
    <property type="component" value="Chromosome"/>
</dbReference>
<dbReference type="GO" id="GO:0016705">
    <property type="term" value="F:oxidoreductase activity, acting on paired donors, with incorporation or reduction of molecular oxygen"/>
    <property type="evidence" value="ECO:0007669"/>
    <property type="project" value="UniProtKB-UniRule"/>
</dbReference>
<dbReference type="GO" id="GO:0006400">
    <property type="term" value="P:tRNA modification"/>
    <property type="evidence" value="ECO:0007669"/>
    <property type="project" value="UniProtKB-UniRule"/>
</dbReference>
<dbReference type="CDD" id="cd01518">
    <property type="entry name" value="RHOD_YceA"/>
    <property type="match status" value="1"/>
</dbReference>
<dbReference type="Gene3D" id="3.30.70.100">
    <property type="match status" value="1"/>
</dbReference>
<dbReference type="Gene3D" id="3.40.250.10">
    <property type="entry name" value="Rhodanese-like domain"/>
    <property type="match status" value="1"/>
</dbReference>
<dbReference type="HAMAP" id="MF_00469">
    <property type="entry name" value="TrhO"/>
    <property type="match status" value="1"/>
</dbReference>
<dbReference type="InterPro" id="IPR001763">
    <property type="entry name" value="Rhodanese-like_dom"/>
</dbReference>
<dbReference type="InterPro" id="IPR036873">
    <property type="entry name" value="Rhodanese-like_dom_sf"/>
</dbReference>
<dbReference type="InterPro" id="IPR020936">
    <property type="entry name" value="TrhO"/>
</dbReference>
<dbReference type="InterPro" id="IPR040503">
    <property type="entry name" value="TRHO_N"/>
</dbReference>
<dbReference type="NCBIfam" id="NF001136">
    <property type="entry name" value="PRK00142.1-4"/>
    <property type="match status" value="1"/>
</dbReference>
<dbReference type="PANTHER" id="PTHR43268:SF3">
    <property type="entry name" value="RHODANESE-LIKE DOMAIN-CONTAINING PROTEIN 7-RELATED"/>
    <property type="match status" value="1"/>
</dbReference>
<dbReference type="PANTHER" id="PTHR43268">
    <property type="entry name" value="THIOSULFATE SULFURTRANSFERASE/RHODANESE-LIKE DOMAIN-CONTAINING PROTEIN 2"/>
    <property type="match status" value="1"/>
</dbReference>
<dbReference type="Pfam" id="PF00581">
    <property type="entry name" value="Rhodanese"/>
    <property type="match status" value="1"/>
</dbReference>
<dbReference type="Pfam" id="PF17773">
    <property type="entry name" value="UPF0176_N"/>
    <property type="match status" value="1"/>
</dbReference>
<dbReference type="SMART" id="SM00450">
    <property type="entry name" value="RHOD"/>
    <property type="match status" value="1"/>
</dbReference>
<dbReference type="SUPFAM" id="SSF52821">
    <property type="entry name" value="Rhodanese/Cell cycle control phosphatase"/>
    <property type="match status" value="1"/>
</dbReference>
<dbReference type="PROSITE" id="PS50206">
    <property type="entry name" value="RHODANESE_3"/>
    <property type="match status" value="1"/>
</dbReference>
<comment type="function">
    <text evidence="1">Catalyzes oxygen-dependent 5-hydroxyuridine (ho5U) modification at position 34 in tRNAs.</text>
</comment>
<comment type="catalytic activity">
    <reaction evidence="1">
        <text>uridine(34) in tRNA + AH2 + O2 = 5-hydroxyuridine(34) in tRNA + A + H2O</text>
        <dbReference type="Rhea" id="RHEA:64224"/>
        <dbReference type="Rhea" id="RHEA-COMP:11727"/>
        <dbReference type="Rhea" id="RHEA-COMP:13381"/>
        <dbReference type="ChEBI" id="CHEBI:13193"/>
        <dbReference type="ChEBI" id="CHEBI:15377"/>
        <dbReference type="ChEBI" id="CHEBI:15379"/>
        <dbReference type="ChEBI" id="CHEBI:17499"/>
        <dbReference type="ChEBI" id="CHEBI:65315"/>
        <dbReference type="ChEBI" id="CHEBI:136877"/>
    </reaction>
</comment>
<comment type="similarity">
    <text evidence="1">Belongs to the TrhO family.</text>
</comment>
<feature type="chain" id="PRO_0000161498" description="tRNA uridine(34) hydroxylase">
    <location>
        <begin position="1"/>
        <end position="310"/>
    </location>
</feature>
<feature type="domain" description="Rhodanese" evidence="1">
    <location>
        <begin position="124"/>
        <end position="218"/>
    </location>
</feature>
<feature type="active site" description="Cysteine persulfide intermediate" evidence="1">
    <location>
        <position position="178"/>
    </location>
</feature>
<accession>Q88M17</accession>
<protein>
    <recommendedName>
        <fullName evidence="1">tRNA uridine(34) hydroxylase</fullName>
        <ecNumber evidence="1">1.14.-.-</ecNumber>
    </recommendedName>
    <alternativeName>
        <fullName evidence="1">tRNA hydroxylation protein O</fullName>
    </alternativeName>
</protein>
<proteinExistence type="inferred from homology"/>
<keyword id="KW-0560">Oxidoreductase</keyword>
<keyword id="KW-1185">Reference proteome</keyword>
<keyword id="KW-0819">tRNA processing</keyword>
<organism>
    <name type="scientific">Pseudomonas putida (strain ATCC 47054 / DSM 6125 / CFBP 8728 / NCIMB 11950 / KT2440)</name>
    <dbReference type="NCBI Taxonomy" id="160488"/>
    <lineage>
        <taxon>Bacteria</taxon>
        <taxon>Pseudomonadati</taxon>
        <taxon>Pseudomonadota</taxon>
        <taxon>Gammaproteobacteria</taxon>
        <taxon>Pseudomonadales</taxon>
        <taxon>Pseudomonadaceae</taxon>
        <taxon>Pseudomonas</taxon>
    </lineage>
</organism>
<sequence length="310" mass="35163">MSQAIVVAALYKFVTLEDYVELREPLLKTMLDNNVKGTLLLAQEGINGTVSGTREGIDGLLAWLRSDPRLVDIDHKESYCDEQPFYRTKVKLKKEIVTLGVPGVDPNKAVGTYVEPKDWNALISDPEVLLIDTRNDYEVAIGTFKGAIDPKTETFREFPEYIKANFDPSKHKKVAMFCTGGIRCEKASSYMLGEGFESVYHLKGGILKYFEEVPQEESLWDGDCFVFDNRVTVRHDLSEGEYDQCHACRHPINAQERASEHYSPGVSCPHCWDSLSEKTRRSAIDRQKQIELAKARNLPHPIGYYYKAEA</sequence>
<name>TRHO_PSEPK</name>